<keyword id="KW-0687">Ribonucleoprotein</keyword>
<keyword id="KW-0689">Ribosomal protein</keyword>
<keyword id="KW-0694">RNA-binding</keyword>
<keyword id="KW-0699">rRNA-binding</keyword>
<keyword id="KW-0820">tRNA-binding</keyword>
<comment type="function">
    <text evidence="1">Located at the top of the head of the 30S subunit, it contacts several helices of the 16S rRNA. In the 70S ribosome it contacts the 23S rRNA (bridge B1a) and protein L5 of the 50S subunit (bridge B1b), connecting the 2 subunits; these bridges are implicated in subunit movement. Contacts the tRNAs in the A and P-sites (By similarity).</text>
</comment>
<comment type="subunit">
    <text evidence="1">Part of the 30S ribosomal subunit. Forms a loose heterodimer with protein S19. Forms two bridges to the 50S subunit in the 70S ribosome (By similarity).</text>
</comment>
<comment type="similarity">
    <text evidence="2">Belongs to the universal ribosomal protein uS13 family.</text>
</comment>
<evidence type="ECO:0000250" key="1"/>
<evidence type="ECO:0000305" key="2"/>
<reference key="1">
    <citation type="journal article" date="1991" name="J. Gen. Microbiol.">
        <title>Nucleotide sequence of a Lactococcus lactis gene cluster encoding adenylate kinase, initiation factor 1 and ribosomal proteins.</title>
        <authorList>
            <person name="Koivula T."/>
            <person name="Hemilae H."/>
        </authorList>
    </citation>
    <scope>NUCLEOTIDE SEQUENCE [GENOMIC DNA]</scope>
    <source>
        <strain>MG1614</strain>
    </source>
</reference>
<accession>P0A4B0</accession>
<accession>P27147</accession>
<feature type="chain" id="PRO_0000132099" description="Small ribosomal subunit protein uS13">
    <location>
        <begin position="1"/>
        <end position="51" status="greater than"/>
    </location>
</feature>
<feature type="non-terminal residue">
    <location>
        <position position="51"/>
    </location>
</feature>
<proteinExistence type="inferred from homology"/>
<sequence>MARFAGVDIPNEKRIVISLTYVFGVGLQTSKKVLAAAGVSEDIRTKDLTSD</sequence>
<protein>
    <recommendedName>
        <fullName evidence="2">Small ribosomal subunit protein uS13</fullName>
    </recommendedName>
    <alternativeName>
        <fullName>30S ribosomal protein S13</fullName>
    </alternativeName>
</protein>
<dbReference type="SMR" id="P0A4B0"/>
<dbReference type="GO" id="GO:1990904">
    <property type="term" value="C:ribonucleoprotein complex"/>
    <property type="evidence" value="ECO:0007669"/>
    <property type="project" value="UniProtKB-KW"/>
</dbReference>
<dbReference type="GO" id="GO:0005840">
    <property type="term" value="C:ribosome"/>
    <property type="evidence" value="ECO:0007669"/>
    <property type="project" value="UniProtKB-KW"/>
</dbReference>
<dbReference type="GO" id="GO:0019843">
    <property type="term" value="F:rRNA binding"/>
    <property type="evidence" value="ECO:0007669"/>
    <property type="project" value="UniProtKB-KW"/>
</dbReference>
<dbReference type="GO" id="GO:0003735">
    <property type="term" value="F:structural constituent of ribosome"/>
    <property type="evidence" value="ECO:0007669"/>
    <property type="project" value="InterPro"/>
</dbReference>
<dbReference type="GO" id="GO:0000049">
    <property type="term" value="F:tRNA binding"/>
    <property type="evidence" value="ECO:0007669"/>
    <property type="project" value="UniProtKB-KW"/>
</dbReference>
<dbReference type="GO" id="GO:0006412">
    <property type="term" value="P:translation"/>
    <property type="evidence" value="ECO:0007669"/>
    <property type="project" value="InterPro"/>
</dbReference>
<dbReference type="FunFam" id="1.10.8.50:FF:000001">
    <property type="entry name" value="30S ribosomal protein S13"/>
    <property type="match status" value="1"/>
</dbReference>
<dbReference type="Gene3D" id="1.10.8.50">
    <property type="match status" value="1"/>
</dbReference>
<dbReference type="InterPro" id="IPR001892">
    <property type="entry name" value="Ribosomal_uS13"/>
</dbReference>
<dbReference type="InterPro" id="IPR010979">
    <property type="entry name" value="Ribosomal_uS13-like_H2TH"/>
</dbReference>
<dbReference type="Pfam" id="PF00416">
    <property type="entry name" value="Ribosomal_S13"/>
    <property type="match status" value="1"/>
</dbReference>
<dbReference type="SUPFAM" id="SSF46946">
    <property type="entry name" value="S13-like H2TH domain"/>
    <property type="match status" value="1"/>
</dbReference>
<dbReference type="PROSITE" id="PS50159">
    <property type="entry name" value="RIBOSOMAL_S13_2"/>
    <property type="match status" value="1"/>
</dbReference>
<organism>
    <name type="scientific">Lactococcus lactis subsp. cremoris</name>
    <name type="common">Streptococcus cremoris</name>
    <dbReference type="NCBI Taxonomy" id="1359"/>
    <lineage>
        <taxon>Bacteria</taxon>
        <taxon>Bacillati</taxon>
        <taxon>Bacillota</taxon>
        <taxon>Bacilli</taxon>
        <taxon>Lactobacillales</taxon>
        <taxon>Streptococcaceae</taxon>
        <taxon>Lactococcus</taxon>
    </lineage>
</organism>
<gene>
    <name type="primary">rpsM</name>
</gene>
<name>RS13_LACLC</name>